<comment type="function">
    <text evidence="4">Catalyzes the phosphorylation of riboflavin (vitamin B2) to form flavin mononucleotide (FMN) coenzyme.</text>
</comment>
<comment type="catalytic activity">
    <reaction evidence="4">
        <text>riboflavin + ATP = FMN + ADP + H(+)</text>
        <dbReference type="Rhea" id="RHEA:14357"/>
        <dbReference type="ChEBI" id="CHEBI:15378"/>
        <dbReference type="ChEBI" id="CHEBI:30616"/>
        <dbReference type="ChEBI" id="CHEBI:57986"/>
        <dbReference type="ChEBI" id="CHEBI:58210"/>
        <dbReference type="ChEBI" id="CHEBI:456216"/>
        <dbReference type="EC" id="2.7.1.26"/>
    </reaction>
    <physiologicalReaction direction="left-to-right" evidence="7">
        <dbReference type="Rhea" id="RHEA:14358"/>
    </physiologicalReaction>
</comment>
<comment type="cofactor">
    <cofactor evidence="1">
        <name>Zn(2+)</name>
        <dbReference type="ChEBI" id="CHEBI:29105"/>
    </cofactor>
    <cofactor evidence="1">
        <name>Mg(2+)</name>
        <dbReference type="ChEBI" id="CHEBI:18420"/>
    </cofactor>
    <text evidence="1">Zinc or magnesium.</text>
</comment>
<comment type="pathway">
    <text>Cofactor biosynthesis; FMN biosynthesis; FMN from riboflavin (ATP route): step 1/1.</text>
</comment>
<comment type="subcellular location">
    <subcellularLocation>
        <location evidence="4">Microsome</location>
    </subcellularLocation>
    <subcellularLocation>
        <location evidence="4">Mitochondrion inner membrane</location>
    </subcellularLocation>
    <subcellularLocation>
        <location evidence="6">Endoplasmic reticulum</location>
    </subcellularLocation>
    <text>90% microsomal. 10% mitochondrial. Found to be present in the inner membrane of mitochondria. The C-terminus is located in the matrix.</text>
</comment>
<comment type="miscellaneous">
    <text>FMN1 is essential for growth on rich medium.</text>
</comment>
<comment type="miscellaneous">
    <text evidence="5">Present with 830 molecules/cell in log phase SD medium.</text>
</comment>
<comment type="similarity">
    <text evidence="6">Belongs to the flavokinase family.</text>
</comment>
<comment type="caution">
    <text evidence="6">The subcellular location of this enzyme needs further confirmation.</text>
</comment>
<evidence type="ECO:0000250" key="1"/>
<evidence type="ECO:0000250" key="2">
    <source>
        <dbReference type="UniProtKB" id="Q969G6"/>
    </source>
</evidence>
<evidence type="ECO:0000255" key="3"/>
<evidence type="ECO:0000269" key="4">
    <source>
    </source>
</evidence>
<evidence type="ECO:0000269" key="5">
    <source>
    </source>
</evidence>
<evidence type="ECO:0000305" key="6"/>
<evidence type="ECO:0000305" key="7">
    <source>
    </source>
</evidence>
<name>RIFK_YEAST</name>
<protein>
    <recommendedName>
        <fullName>Riboflavin kinase</fullName>
        <ecNumber evidence="4">2.7.1.26</ecNumber>
    </recommendedName>
    <alternativeName>
        <fullName>Flavin mononucleotide kinase 1</fullName>
    </alternativeName>
</protein>
<keyword id="KW-0067">ATP-binding</keyword>
<keyword id="KW-0256">Endoplasmic reticulum</keyword>
<keyword id="KW-0285">Flavoprotein</keyword>
<keyword id="KW-0288">FMN</keyword>
<keyword id="KW-0418">Kinase</keyword>
<keyword id="KW-0460">Magnesium</keyword>
<keyword id="KW-0472">Membrane</keyword>
<keyword id="KW-0479">Metal-binding</keyword>
<keyword id="KW-0492">Microsome</keyword>
<keyword id="KW-0496">Mitochondrion</keyword>
<keyword id="KW-0999">Mitochondrion inner membrane</keyword>
<keyword id="KW-0547">Nucleotide-binding</keyword>
<keyword id="KW-1185">Reference proteome</keyword>
<keyword id="KW-0732">Signal</keyword>
<keyword id="KW-0808">Transferase</keyword>
<keyword id="KW-0862">Zinc</keyword>
<sequence>MFTWTIYVSLLLVLAGTFLMNRNTNTDIIDTFKREVDLPIPAQPGPPFPLVTDYCDIVCGFGRGSAELGIPTANVPINQLPKGINDLDLGVYFGFAHIKTVDGQELSVETRRDGRTVVYNYGQYLSEANDDLSVLPMVLSVGKNPFYGNDFKTMELHIIHDFKNDFYGARVKFNILGHIRPELNYTTKEALIEDINIDIRTAQTVLATPPYQVFKQQL</sequence>
<accession>Q03778</accession>
<accession>D6VSL7</accession>
<reference key="1">
    <citation type="journal article" date="1997" name="Nature">
        <title>The nucleotide sequence of Saccharomyces cerevisiae chromosome IV.</title>
        <authorList>
            <person name="Jacq C."/>
            <person name="Alt-Moerbe J."/>
            <person name="Andre B."/>
            <person name="Arnold W."/>
            <person name="Bahr A."/>
            <person name="Ballesta J.P.G."/>
            <person name="Bargues M."/>
            <person name="Baron L."/>
            <person name="Becker A."/>
            <person name="Biteau N."/>
            <person name="Bloecker H."/>
            <person name="Blugeon C."/>
            <person name="Boskovic J."/>
            <person name="Brandt P."/>
            <person name="Brueckner M."/>
            <person name="Buitrago M.J."/>
            <person name="Coster F."/>
            <person name="Delaveau T."/>
            <person name="del Rey F."/>
            <person name="Dujon B."/>
            <person name="Eide L.G."/>
            <person name="Garcia-Cantalejo J.M."/>
            <person name="Goffeau A."/>
            <person name="Gomez-Peris A."/>
            <person name="Granotier C."/>
            <person name="Hanemann V."/>
            <person name="Hankeln T."/>
            <person name="Hoheisel J.D."/>
            <person name="Jaeger W."/>
            <person name="Jimenez A."/>
            <person name="Jonniaux J.-L."/>
            <person name="Kraemer C."/>
            <person name="Kuester H."/>
            <person name="Laamanen P."/>
            <person name="Legros Y."/>
            <person name="Louis E.J."/>
            <person name="Moeller-Rieker S."/>
            <person name="Monnet A."/>
            <person name="Moro M."/>
            <person name="Mueller-Auer S."/>
            <person name="Nussbaumer B."/>
            <person name="Paricio N."/>
            <person name="Paulin L."/>
            <person name="Perea J."/>
            <person name="Perez-Alonso M."/>
            <person name="Perez-Ortin J.E."/>
            <person name="Pohl T.M."/>
            <person name="Prydz H."/>
            <person name="Purnelle B."/>
            <person name="Rasmussen S.W."/>
            <person name="Remacha M.A."/>
            <person name="Revuelta J.L."/>
            <person name="Rieger M."/>
            <person name="Salom D."/>
            <person name="Saluz H.P."/>
            <person name="Saiz J.E."/>
            <person name="Saren A.-M."/>
            <person name="Schaefer M."/>
            <person name="Scharfe M."/>
            <person name="Schmidt E.R."/>
            <person name="Schneider C."/>
            <person name="Scholler P."/>
            <person name="Schwarz S."/>
            <person name="Soler-Mira A."/>
            <person name="Urrestarazu L.A."/>
            <person name="Verhasselt P."/>
            <person name="Vissers S."/>
            <person name="Voet M."/>
            <person name="Volckaert G."/>
            <person name="Wagner G."/>
            <person name="Wambutt R."/>
            <person name="Wedler E."/>
            <person name="Wedler H."/>
            <person name="Woelfl S."/>
            <person name="Harris D.E."/>
            <person name="Bowman S."/>
            <person name="Brown D."/>
            <person name="Churcher C.M."/>
            <person name="Connor R."/>
            <person name="Dedman K."/>
            <person name="Gentles S."/>
            <person name="Hamlin N."/>
            <person name="Hunt S."/>
            <person name="Jones L."/>
            <person name="McDonald S."/>
            <person name="Murphy L.D."/>
            <person name="Niblett D."/>
            <person name="Odell C."/>
            <person name="Oliver K."/>
            <person name="Rajandream M.A."/>
            <person name="Richards C."/>
            <person name="Shore L."/>
            <person name="Walsh S.V."/>
            <person name="Barrell B.G."/>
            <person name="Dietrich F.S."/>
            <person name="Mulligan J.T."/>
            <person name="Allen E."/>
            <person name="Araujo R."/>
            <person name="Aviles E."/>
            <person name="Berno A."/>
            <person name="Carpenter J."/>
            <person name="Chen E."/>
            <person name="Cherry J.M."/>
            <person name="Chung E."/>
            <person name="Duncan M."/>
            <person name="Hunicke-Smith S."/>
            <person name="Hyman R.W."/>
            <person name="Komp C."/>
            <person name="Lashkari D."/>
            <person name="Lew H."/>
            <person name="Lin D."/>
            <person name="Mosedale D."/>
            <person name="Nakahara K."/>
            <person name="Namath A."/>
            <person name="Oefner P."/>
            <person name="Oh C."/>
            <person name="Petel F.X."/>
            <person name="Roberts D."/>
            <person name="Schramm S."/>
            <person name="Schroeder M."/>
            <person name="Shogren T."/>
            <person name="Shroff N."/>
            <person name="Winant A."/>
            <person name="Yelton M.A."/>
            <person name="Botstein D."/>
            <person name="Davis R.W."/>
            <person name="Johnston M."/>
            <person name="Andrews S."/>
            <person name="Brinkman R."/>
            <person name="Cooper J."/>
            <person name="Ding H."/>
            <person name="Du Z."/>
            <person name="Favello A."/>
            <person name="Fulton L."/>
            <person name="Gattung S."/>
            <person name="Greco T."/>
            <person name="Hallsworth K."/>
            <person name="Hawkins J."/>
            <person name="Hillier L.W."/>
            <person name="Jier M."/>
            <person name="Johnson D."/>
            <person name="Johnston L."/>
            <person name="Kirsten J."/>
            <person name="Kucaba T."/>
            <person name="Langston Y."/>
            <person name="Latreille P."/>
            <person name="Le T."/>
            <person name="Mardis E."/>
            <person name="Menezes S."/>
            <person name="Miller N."/>
            <person name="Nhan M."/>
            <person name="Pauley A."/>
            <person name="Peluso D."/>
            <person name="Rifkin L."/>
            <person name="Riles L."/>
            <person name="Taich A."/>
            <person name="Trevaskis E."/>
            <person name="Vignati D."/>
            <person name="Wilcox L."/>
            <person name="Wohldman P."/>
            <person name="Vaudin M."/>
            <person name="Wilson R."/>
            <person name="Waterston R."/>
            <person name="Albermann K."/>
            <person name="Hani J."/>
            <person name="Heumann K."/>
            <person name="Kleine K."/>
            <person name="Mewes H.-W."/>
            <person name="Zollner A."/>
            <person name="Zaccaria P."/>
        </authorList>
    </citation>
    <scope>NUCLEOTIDE SEQUENCE [LARGE SCALE GENOMIC DNA]</scope>
    <source>
        <strain>ATCC 204508 / S288c</strain>
    </source>
</reference>
<reference key="2">
    <citation type="journal article" date="2014" name="G3 (Bethesda)">
        <title>The reference genome sequence of Saccharomyces cerevisiae: Then and now.</title>
        <authorList>
            <person name="Engel S.R."/>
            <person name="Dietrich F.S."/>
            <person name="Fisk D.G."/>
            <person name="Binkley G."/>
            <person name="Balakrishnan R."/>
            <person name="Costanzo M.C."/>
            <person name="Dwight S.S."/>
            <person name="Hitz B.C."/>
            <person name="Karra K."/>
            <person name="Nash R.S."/>
            <person name="Weng S."/>
            <person name="Wong E.D."/>
            <person name="Lloyd P."/>
            <person name="Skrzypek M.S."/>
            <person name="Miyasato S.R."/>
            <person name="Simison M."/>
            <person name="Cherry J.M."/>
        </authorList>
    </citation>
    <scope>GENOME REANNOTATION</scope>
    <source>
        <strain>ATCC 204508 / S288c</strain>
    </source>
</reference>
<reference key="3">
    <citation type="journal article" date="2007" name="Genome Res.">
        <title>Approaching a complete repository of sequence-verified protein-encoding clones for Saccharomyces cerevisiae.</title>
        <authorList>
            <person name="Hu Y."/>
            <person name="Rolfs A."/>
            <person name="Bhullar B."/>
            <person name="Murthy T.V.S."/>
            <person name="Zhu C."/>
            <person name="Berger M.F."/>
            <person name="Camargo A.A."/>
            <person name="Kelley F."/>
            <person name="McCarron S."/>
            <person name="Jepson D."/>
            <person name="Richardson A."/>
            <person name="Raphael J."/>
            <person name="Moreira D."/>
            <person name="Taycher E."/>
            <person name="Zuo D."/>
            <person name="Mohr S."/>
            <person name="Kane M.F."/>
            <person name="Williamson J."/>
            <person name="Simpson A.J.G."/>
            <person name="Bulyk M.L."/>
            <person name="Harlow E."/>
            <person name="Marsischky G."/>
            <person name="Kolodner R.D."/>
            <person name="LaBaer J."/>
        </authorList>
    </citation>
    <scope>NUCLEOTIDE SEQUENCE [GENOMIC DNA]</scope>
    <source>
        <strain>ATCC 204508 / S288c</strain>
    </source>
</reference>
<reference key="4">
    <citation type="journal article" date="2000" name="J. Biol. Chem.">
        <title>Molecular characterization of FMN1, the structural gene for the monofunctional flavokinase of Saccharomyces cerevisiae.</title>
        <authorList>
            <person name="Santos M.A."/>
            <person name="Jimenez A."/>
            <person name="Revuelta J.L."/>
        </authorList>
    </citation>
    <scope>FUNCTION</scope>
    <scope>SUBCELLULAR LOCATION</scope>
    <scope>CATALYTIC ACTIVITY</scope>
</reference>
<reference key="5">
    <citation type="journal article" date="2003" name="Nature">
        <title>Global analysis of protein expression in yeast.</title>
        <authorList>
            <person name="Ghaemmaghami S."/>
            <person name="Huh W.-K."/>
            <person name="Bower K."/>
            <person name="Howson R.W."/>
            <person name="Belle A."/>
            <person name="Dephoure N."/>
            <person name="O'Shea E.K."/>
            <person name="Weissman J.S."/>
        </authorList>
    </citation>
    <scope>LEVEL OF PROTEIN EXPRESSION [LARGE SCALE ANALYSIS]</scope>
</reference>
<gene>
    <name type="primary">FMN1</name>
    <name type="ordered locus">YDR236C</name>
    <name type="ORF">YD8419.03C</name>
</gene>
<organism>
    <name type="scientific">Saccharomyces cerevisiae (strain ATCC 204508 / S288c)</name>
    <name type="common">Baker's yeast</name>
    <dbReference type="NCBI Taxonomy" id="559292"/>
    <lineage>
        <taxon>Eukaryota</taxon>
        <taxon>Fungi</taxon>
        <taxon>Dikarya</taxon>
        <taxon>Ascomycota</taxon>
        <taxon>Saccharomycotina</taxon>
        <taxon>Saccharomycetes</taxon>
        <taxon>Saccharomycetales</taxon>
        <taxon>Saccharomycetaceae</taxon>
        <taxon>Saccharomyces</taxon>
    </lineage>
</organism>
<proteinExistence type="evidence at protein level"/>
<dbReference type="EC" id="2.7.1.26" evidence="4"/>
<dbReference type="EMBL" id="Z49701">
    <property type="protein sequence ID" value="CAA89722.1"/>
    <property type="molecule type" value="Genomic_DNA"/>
</dbReference>
<dbReference type="EMBL" id="AY557733">
    <property type="protein sequence ID" value="AAS56059.1"/>
    <property type="molecule type" value="Genomic_DNA"/>
</dbReference>
<dbReference type="EMBL" id="BK006938">
    <property type="protein sequence ID" value="DAA12077.1"/>
    <property type="molecule type" value="Genomic_DNA"/>
</dbReference>
<dbReference type="PIR" id="S54532">
    <property type="entry name" value="S54532"/>
</dbReference>
<dbReference type="RefSeq" id="NP_010522.1">
    <property type="nucleotide sequence ID" value="NM_001180544.1"/>
</dbReference>
<dbReference type="SMR" id="Q03778"/>
<dbReference type="BioGRID" id="32287">
    <property type="interactions" value="210"/>
</dbReference>
<dbReference type="DIP" id="DIP-1316N"/>
<dbReference type="FunCoup" id="Q03778">
    <property type="interactions" value="452"/>
</dbReference>
<dbReference type="IntAct" id="Q03778">
    <property type="interactions" value="3"/>
</dbReference>
<dbReference type="MINT" id="Q03778"/>
<dbReference type="STRING" id="4932.YDR236C"/>
<dbReference type="iPTMnet" id="Q03778"/>
<dbReference type="PaxDb" id="4932-YDR236C"/>
<dbReference type="PeptideAtlas" id="Q03778"/>
<dbReference type="EnsemblFungi" id="YDR236C_mRNA">
    <property type="protein sequence ID" value="YDR236C"/>
    <property type="gene ID" value="YDR236C"/>
</dbReference>
<dbReference type="GeneID" id="851822"/>
<dbReference type="KEGG" id="sce:YDR236C"/>
<dbReference type="AGR" id="SGD:S000002644"/>
<dbReference type="SGD" id="S000002644">
    <property type="gene designation" value="FMN1"/>
</dbReference>
<dbReference type="VEuPathDB" id="FungiDB:YDR236C"/>
<dbReference type="eggNOG" id="KOG3110">
    <property type="taxonomic scope" value="Eukaryota"/>
</dbReference>
<dbReference type="GeneTree" id="ENSGT00390000015537"/>
<dbReference type="HOGENOM" id="CLU_048437_3_2_1"/>
<dbReference type="InParanoid" id="Q03778"/>
<dbReference type="OMA" id="NGEVHKM"/>
<dbReference type="OrthoDB" id="276388at2759"/>
<dbReference type="BioCyc" id="MetaCyc:YDR236C-MONOMER"/>
<dbReference type="BioCyc" id="YEAST:YDR236C-MONOMER"/>
<dbReference type="Reactome" id="R-SCE-196843">
    <property type="pathway name" value="Vitamin B2 (riboflavin) metabolism"/>
</dbReference>
<dbReference type="UniPathway" id="UPA00276">
    <property type="reaction ID" value="UER00406"/>
</dbReference>
<dbReference type="BioGRID-ORCS" id="851822">
    <property type="hits" value="9 hits in 10 CRISPR screens"/>
</dbReference>
<dbReference type="PRO" id="PR:Q03778"/>
<dbReference type="Proteomes" id="UP000002311">
    <property type="component" value="Chromosome IV"/>
</dbReference>
<dbReference type="RNAct" id="Q03778">
    <property type="molecule type" value="protein"/>
</dbReference>
<dbReference type="GO" id="GO:0005783">
    <property type="term" value="C:endoplasmic reticulum"/>
    <property type="evidence" value="ECO:0007669"/>
    <property type="project" value="UniProtKB-SubCell"/>
</dbReference>
<dbReference type="GO" id="GO:0043231">
    <property type="term" value="C:intracellular membrane-bounded organelle"/>
    <property type="evidence" value="ECO:0000314"/>
    <property type="project" value="SGD"/>
</dbReference>
<dbReference type="GO" id="GO:0005743">
    <property type="term" value="C:mitochondrial inner membrane"/>
    <property type="evidence" value="ECO:0000314"/>
    <property type="project" value="SGD"/>
</dbReference>
<dbReference type="GO" id="GO:0005739">
    <property type="term" value="C:mitochondrion"/>
    <property type="evidence" value="ECO:0000318"/>
    <property type="project" value="GO_Central"/>
</dbReference>
<dbReference type="GO" id="GO:0005524">
    <property type="term" value="F:ATP binding"/>
    <property type="evidence" value="ECO:0007669"/>
    <property type="project" value="UniProtKB-KW"/>
</dbReference>
<dbReference type="GO" id="GO:0046872">
    <property type="term" value="F:metal ion binding"/>
    <property type="evidence" value="ECO:0007669"/>
    <property type="project" value="UniProtKB-KW"/>
</dbReference>
<dbReference type="GO" id="GO:0008531">
    <property type="term" value="F:riboflavin kinase activity"/>
    <property type="evidence" value="ECO:0000314"/>
    <property type="project" value="MGI"/>
</dbReference>
<dbReference type="GO" id="GO:0009398">
    <property type="term" value="P:FMN biosynthetic process"/>
    <property type="evidence" value="ECO:0000314"/>
    <property type="project" value="SGD"/>
</dbReference>
<dbReference type="GO" id="GO:0009231">
    <property type="term" value="P:riboflavin biosynthetic process"/>
    <property type="evidence" value="ECO:0007669"/>
    <property type="project" value="InterPro"/>
</dbReference>
<dbReference type="GO" id="GO:0006771">
    <property type="term" value="P:riboflavin metabolic process"/>
    <property type="evidence" value="ECO:0000318"/>
    <property type="project" value="GO_Central"/>
</dbReference>
<dbReference type="FunFam" id="2.40.30.30:FF:000007">
    <property type="entry name" value="Riboflavin kinase"/>
    <property type="match status" value="1"/>
</dbReference>
<dbReference type="Gene3D" id="2.40.30.30">
    <property type="entry name" value="Riboflavin kinase-like"/>
    <property type="match status" value="1"/>
</dbReference>
<dbReference type="InterPro" id="IPR023468">
    <property type="entry name" value="Riboflavin_kinase"/>
</dbReference>
<dbReference type="InterPro" id="IPR015865">
    <property type="entry name" value="Riboflavin_kinase_bac/euk"/>
</dbReference>
<dbReference type="InterPro" id="IPR023465">
    <property type="entry name" value="Riboflavin_kinase_dom_sf"/>
</dbReference>
<dbReference type="PANTHER" id="PTHR22749:SF6">
    <property type="entry name" value="RIBOFLAVIN KINASE"/>
    <property type="match status" value="1"/>
</dbReference>
<dbReference type="PANTHER" id="PTHR22749">
    <property type="entry name" value="RIBOFLAVIN KINASE/FMN ADENYLYLTRANSFERASE"/>
    <property type="match status" value="1"/>
</dbReference>
<dbReference type="Pfam" id="PF01687">
    <property type="entry name" value="Flavokinase"/>
    <property type="match status" value="1"/>
</dbReference>
<dbReference type="SMART" id="SM00904">
    <property type="entry name" value="Flavokinase"/>
    <property type="match status" value="1"/>
</dbReference>
<dbReference type="SUPFAM" id="SSF82114">
    <property type="entry name" value="Riboflavin kinase-like"/>
    <property type="match status" value="1"/>
</dbReference>
<feature type="signal peptide" evidence="3">
    <location>
        <begin position="1"/>
        <end position="19"/>
    </location>
</feature>
<feature type="chain" id="PRO_0000030437" description="Riboflavin kinase">
    <location>
        <begin position="20"/>
        <end position="218"/>
    </location>
</feature>
<feature type="active site" description="Nucleophile" evidence="1">
    <location>
        <position position="155"/>
    </location>
</feature>
<feature type="binding site" evidence="2">
    <location>
        <position position="72"/>
    </location>
    <ligand>
        <name>Mg(2+)</name>
        <dbReference type="ChEBI" id="CHEBI:18420"/>
    </ligand>
</feature>
<feature type="binding site" evidence="2">
    <location>
        <position position="74"/>
    </location>
    <ligand>
        <name>Mg(2+)</name>
        <dbReference type="ChEBI" id="CHEBI:18420"/>
    </ligand>
</feature>